<accession>O08374</accession>
<keyword id="KW-0032">Aminotransferase</keyword>
<keyword id="KW-0903">Direct protein sequencing</keyword>
<keyword id="KW-0663">Pyridoxal phosphate</keyword>
<keyword id="KW-0808">Transferase</keyword>
<dbReference type="EC" id="2.6.1.45" evidence="2"/>
<dbReference type="EMBL" id="D86125">
    <property type="protein sequence ID" value="BAA19919.1"/>
    <property type="molecule type" value="Genomic_DNA"/>
</dbReference>
<dbReference type="SMR" id="O08374"/>
<dbReference type="BioCyc" id="MetaCyc:MONOMER-4229"/>
<dbReference type="SABIO-RK" id="O08374"/>
<dbReference type="UniPathway" id="UPA00927"/>
<dbReference type="GO" id="GO:0008453">
    <property type="term" value="F:alanine-glyoxylate transaminase activity"/>
    <property type="evidence" value="ECO:0007669"/>
    <property type="project" value="TreeGrafter"/>
</dbReference>
<dbReference type="GO" id="GO:0050281">
    <property type="term" value="F:L-serine-glyoxylate transaminase activity"/>
    <property type="evidence" value="ECO:0007669"/>
    <property type="project" value="UniProtKB-EC"/>
</dbReference>
<dbReference type="GO" id="GO:0004760">
    <property type="term" value="F:L-serine-pyruvate transaminase activity"/>
    <property type="evidence" value="ECO:0007669"/>
    <property type="project" value="TreeGrafter"/>
</dbReference>
<dbReference type="GO" id="GO:0019265">
    <property type="term" value="P:glycine biosynthetic process, by transamination of glyoxylate"/>
    <property type="evidence" value="ECO:0007669"/>
    <property type="project" value="TreeGrafter"/>
</dbReference>
<dbReference type="CDD" id="cd06451">
    <property type="entry name" value="AGAT_like"/>
    <property type="match status" value="1"/>
</dbReference>
<dbReference type="FunFam" id="3.40.640.10:FF:000054">
    <property type="entry name" value="Serine--glyoxylate aminotransferase"/>
    <property type="match status" value="1"/>
</dbReference>
<dbReference type="FunFam" id="3.90.1150.10:FF:000031">
    <property type="entry name" value="Serine--glyoxylate aminotransferase"/>
    <property type="match status" value="1"/>
</dbReference>
<dbReference type="Gene3D" id="3.90.1150.10">
    <property type="entry name" value="Aspartate Aminotransferase, domain 1"/>
    <property type="match status" value="1"/>
</dbReference>
<dbReference type="Gene3D" id="3.40.640.10">
    <property type="entry name" value="Type I PLP-dependent aspartate aminotransferase-like (Major domain)"/>
    <property type="match status" value="1"/>
</dbReference>
<dbReference type="InterPro" id="IPR000192">
    <property type="entry name" value="Aminotrans_V_dom"/>
</dbReference>
<dbReference type="InterPro" id="IPR015424">
    <property type="entry name" value="PyrdxlP-dep_Trfase"/>
</dbReference>
<dbReference type="InterPro" id="IPR015421">
    <property type="entry name" value="PyrdxlP-dep_Trfase_major"/>
</dbReference>
<dbReference type="InterPro" id="IPR015422">
    <property type="entry name" value="PyrdxlP-dep_Trfase_small"/>
</dbReference>
<dbReference type="InterPro" id="IPR024169">
    <property type="entry name" value="SP_NH2Trfase/AEP_transaminase"/>
</dbReference>
<dbReference type="PANTHER" id="PTHR21152:SF24">
    <property type="entry name" value="ALANINE--GLYOXYLATE AMINOTRANSFERASE 1"/>
    <property type="match status" value="1"/>
</dbReference>
<dbReference type="PANTHER" id="PTHR21152">
    <property type="entry name" value="AMINOTRANSFERASE CLASS V"/>
    <property type="match status" value="1"/>
</dbReference>
<dbReference type="Pfam" id="PF00266">
    <property type="entry name" value="Aminotran_5"/>
    <property type="match status" value="1"/>
</dbReference>
<dbReference type="PIRSF" id="PIRSF000524">
    <property type="entry name" value="SPT"/>
    <property type="match status" value="1"/>
</dbReference>
<dbReference type="SUPFAM" id="SSF53383">
    <property type="entry name" value="PLP-dependent transferases"/>
    <property type="match status" value="1"/>
</dbReference>
<sequence length="405" mass="43894">MTVTPHLFIPGPTNIPDAVRMAMNIPMEDMRSPEFPKFTLPLFEDLKKAFKMKDGRVFIFPSSGTGAWESAVENTLATGDKVLMSRFGQFSLLWVDMCERLGLKVEVCDEEWGTGVPVEKYADILAKDKNHEIKAVFVTHNETATGVSSDVAGVRKALDAAKHPALLMVDGVSSVGSLDMRMGEWGVDCCVSGSQKGFMLPTGLGILAVSQKALDINKSKNGRMNRCFFSFEDMIKTNDQGFFPYTPATQLLRGLRTSLDLLFAEGLDNVFARHTRLASGVRAAVDAWGLKLCAKEPKWYSDTVSAILVPEGIDSNAITKTAYYRYNTSFGLGLNKVAGKVFRIGHLGMLDEVMIGGALFAAEMALKDNGVNLKLGSGTGAAAEYFSKNATKSATALTPKQAKAA</sequence>
<organism>
    <name type="scientific">Hyphomicrobium methylovorum</name>
    <dbReference type="NCBI Taxonomy" id="84"/>
    <lineage>
        <taxon>Bacteria</taxon>
        <taxon>Pseudomonadati</taxon>
        <taxon>Pseudomonadota</taxon>
        <taxon>Alphaproteobacteria</taxon>
        <taxon>Hyphomicrobiales</taxon>
        <taxon>Hyphomicrobiaceae</taxon>
        <taxon>Hyphomicrobium</taxon>
    </lineage>
</organism>
<gene>
    <name type="primary">sgaA</name>
</gene>
<comment type="catalytic activity">
    <reaction evidence="2">
        <text>glyoxylate + L-serine = 3-hydroxypyruvate + glycine</text>
        <dbReference type="Rhea" id="RHEA:19125"/>
        <dbReference type="ChEBI" id="CHEBI:17180"/>
        <dbReference type="ChEBI" id="CHEBI:33384"/>
        <dbReference type="ChEBI" id="CHEBI:36655"/>
        <dbReference type="ChEBI" id="CHEBI:57305"/>
        <dbReference type="EC" id="2.6.1.45"/>
    </reaction>
</comment>
<comment type="cofactor">
    <cofactor evidence="1">
        <name>pyridoxal 5'-phosphate</name>
        <dbReference type="ChEBI" id="CHEBI:597326"/>
    </cofactor>
</comment>
<comment type="biophysicochemical properties">
    <kinetics>
        <KM evidence="2">0.68 mM for glyoxylate</KM>
        <KM evidence="2">3.86 mM for L-serine</KM>
    </kinetics>
</comment>
<comment type="pathway">
    <text evidence="4">One-carbon metabolism; formaldehyde assimilation via serine pathway.</text>
</comment>
<comment type="similarity">
    <text evidence="4">Belongs to the class-V pyridoxal-phosphate-dependent aminotransferase family.</text>
</comment>
<reference key="1">
    <citation type="journal article" date="1996" name="Eur. J. Biochem.">
        <title>Cloning and expression of the gene for serine-glyoxylate aminotransferase from an obligate methylotroph Hyphomicrobium methylovorum GM2.</title>
        <authorList>
            <person name="Hagishita T."/>
            <person name="Yoshida T."/>
            <person name="Izumi Y."/>
            <person name="Mitsunaga T."/>
        </authorList>
    </citation>
    <scope>NUCLEOTIDE SEQUENCE [GENOMIC DNA]</scope>
    <scope>PROTEIN SEQUENCE OF 2-40</scope>
    <scope>CATALYTIC ACTIVITY</scope>
    <scope>BIOPHYSICOCHEMICAL PROPERTIES</scope>
    <source>
        <strain>GM2</strain>
    </source>
</reference>
<evidence type="ECO:0000250" key="1">
    <source>
        <dbReference type="UniProtKB" id="Q988B8"/>
    </source>
</evidence>
<evidence type="ECO:0000269" key="2">
    <source>
    </source>
</evidence>
<evidence type="ECO:0000303" key="3">
    <source>
    </source>
</evidence>
<evidence type="ECO:0000305" key="4"/>
<proteinExistence type="evidence at protein level"/>
<feature type="initiator methionine" description="Removed" evidence="2">
    <location>
        <position position="1"/>
    </location>
</feature>
<feature type="chain" id="PRO_0000150232" description="Serine--glyoxylate aminotransferase">
    <location>
        <begin position="2"/>
        <end position="405"/>
    </location>
</feature>
<feature type="modified residue" description="N6-(pyridoxal phosphate)lysine" evidence="1">
    <location>
        <position position="196"/>
    </location>
</feature>
<protein>
    <recommendedName>
        <fullName evidence="3">Serine--glyoxylate aminotransferase</fullName>
        <shortName evidence="4">SGAT</shortName>
        <ecNumber evidence="2">2.6.1.45</ecNumber>
    </recommendedName>
</protein>
<name>SGAA_HYPME</name>